<proteinExistence type="inferred from homology"/>
<reference key="1">
    <citation type="journal article" date="2004" name="J. Mol. Microbiol. Biotechnol.">
        <title>The complete genome sequence of Bacillus licheniformis DSM13, an organism with great industrial potential.</title>
        <authorList>
            <person name="Veith B."/>
            <person name="Herzberg C."/>
            <person name="Steckel S."/>
            <person name="Feesche J."/>
            <person name="Maurer K.H."/>
            <person name="Ehrenreich P."/>
            <person name="Baeumer S."/>
            <person name="Henne A."/>
            <person name="Liesegang H."/>
            <person name="Merkl R."/>
            <person name="Ehrenreich A."/>
            <person name="Gottschalk G."/>
        </authorList>
    </citation>
    <scope>NUCLEOTIDE SEQUENCE [LARGE SCALE GENOMIC DNA]</scope>
    <source>
        <strain>ATCC 14580 / DSM 13 / JCM 2505 / CCUG 7422 / NBRC 12200 / NCIMB 9375 / NCTC 10341 / NRRL NRS-1264 / Gibson 46</strain>
    </source>
</reference>
<reference key="2">
    <citation type="journal article" date="2004" name="Genome Biol.">
        <title>Complete genome sequence of the industrial bacterium Bacillus licheniformis and comparisons with closely related Bacillus species.</title>
        <authorList>
            <person name="Rey M.W."/>
            <person name="Ramaiya P."/>
            <person name="Nelson B.A."/>
            <person name="Brody-Karpin S.D."/>
            <person name="Zaretsky E.J."/>
            <person name="Tang M."/>
            <person name="Lopez de Leon A."/>
            <person name="Xiang H."/>
            <person name="Gusti V."/>
            <person name="Clausen I.G."/>
            <person name="Olsen P.B."/>
            <person name="Rasmussen M.D."/>
            <person name="Andersen J.T."/>
            <person name="Joergensen P.L."/>
            <person name="Larsen T.S."/>
            <person name="Sorokin A."/>
            <person name="Bolotin A."/>
            <person name="Lapidus A."/>
            <person name="Galleron N."/>
            <person name="Ehrlich S.D."/>
            <person name="Berka R.M."/>
        </authorList>
    </citation>
    <scope>NUCLEOTIDE SEQUENCE [LARGE SCALE GENOMIC DNA]</scope>
    <source>
        <strain>ATCC 14580 / DSM 13 / JCM 2505 / CCUG 7422 / NBRC 12200 / NCIMB 9375 / NCTC 10341 / NRRL NRS-1264 / Gibson 46</strain>
    </source>
</reference>
<evidence type="ECO:0000250" key="1"/>
<evidence type="ECO:0000255" key="2">
    <source>
        <dbReference type="HAMAP-Rule" id="MF_01302"/>
    </source>
</evidence>
<evidence type="ECO:0000305" key="3"/>
<comment type="function">
    <text evidence="2">One of the primary rRNA binding proteins, it binds directly to 16S rRNA central domain where it helps coordinate assembly of the platform of the 30S subunit.</text>
</comment>
<comment type="subunit">
    <text evidence="2">Part of the 30S ribosomal subunit. Contacts proteins S5 and S12.</text>
</comment>
<comment type="similarity">
    <text evidence="2">Belongs to the universal ribosomal protein uS8 family.</text>
</comment>
<keyword id="KW-1185">Reference proteome</keyword>
<keyword id="KW-0687">Ribonucleoprotein</keyword>
<keyword id="KW-0689">Ribosomal protein</keyword>
<keyword id="KW-0694">RNA-binding</keyword>
<keyword id="KW-0699">rRNA-binding</keyword>
<feature type="initiator methionine" description="Removed" evidence="1">
    <location>
        <position position="1"/>
    </location>
</feature>
<feature type="chain" id="PRO_0000126364" description="Small ribosomal subunit protein uS8">
    <location>
        <begin position="2"/>
        <end position="132"/>
    </location>
</feature>
<protein>
    <recommendedName>
        <fullName evidence="2">Small ribosomal subunit protein uS8</fullName>
    </recommendedName>
    <alternativeName>
        <fullName evidence="3">30S ribosomal protein S8</fullName>
    </alternativeName>
</protein>
<gene>
    <name evidence="2" type="primary">rpsH</name>
    <name type="ordered locus">BLi00147</name>
    <name type="ordered locus">BL01037</name>
</gene>
<sequence>MVMTDPIADMLTRIRNANMVRHEKLEIPASKLKREIAEILKREGFIRDVEFIEDNKQGIIRVFLKYGQNNERVITGLKRISKPGLRVYAKSNEVPRVLNGLGIAILSTSQGVLTDKEARAKQAGGEVLAYVW</sequence>
<dbReference type="EMBL" id="AE017333">
    <property type="protein sequence ID" value="AAU39121.1"/>
    <property type="molecule type" value="Genomic_DNA"/>
</dbReference>
<dbReference type="EMBL" id="CP000002">
    <property type="protein sequence ID" value="AAU21776.1"/>
    <property type="molecule type" value="Genomic_DNA"/>
</dbReference>
<dbReference type="RefSeq" id="WP_003178355.1">
    <property type="nucleotide sequence ID" value="NC_006322.1"/>
</dbReference>
<dbReference type="SMR" id="Q65P93"/>
<dbReference type="STRING" id="279010.BL01037"/>
<dbReference type="GeneID" id="92858889"/>
<dbReference type="KEGG" id="bld:BLi00147"/>
<dbReference type="KEGG" id="bli:BL01037"/>
<dbReference type="eggNOG" id="COG0096">
    <property type="taxonomic scope" value="Bacteria"/>
</dbReference>
<dbReference type="HOGENOM" id="CLU_098428_0_2_9"/>
<dbReference type="Proteomes" id="UP000000606">
    <property type="component" value="Chromosome"/>
</dbReference>
<dbReference type="GO" id="GO:1990904">
    <property type="term" value="C:ribonucleoprotein complex"/>
    <property type="evidence" value="ECO:0007669"/>
    <property type="project" value="UniProtKB-KW"/>
</dbReference>
<dbReference type="GO" id="GO:0005840">
    <property type="term" value="C:ribosome"/>
    <property type="evidence" value="ECO:0007669"/>
    <property type="project" value="UniProtKB-KW"/>
</dbReference>
<dbReference type="GO" id="GO:0019843">
    <property type="term" value="F:rRNA binding"/>
    <property type="evidence" value="ECO:0007669"/>
    <property type="project" value="UniProtKB-UniRule"/>
</dbReference>
<dbReference type="GO" id="GO:0003735">
    <property type="term" value="F:structural constituent of ribosome"/>
    <property type="evidence" value="ECO:0007669"/>
    <property type="project" value="InterPro"/>
</dbReference>
<dbReference type="GO" id="GO:0006412">
    <property type="term" value="P:translation"/>
    <property type="evidence" value="ECO:0007669"/>
    <property type="project" value="UniProtKB-UniRule"/>
</dbReference>
<dbReference type="FunFam" id="3.30.1370.30:FF:000002">
    <property type="entry name" value="30S ribosomal protein S8"/>
    <property type="match status" value="1"/>
</dbReference>
<dbReference type="FunFam" id="3.30.1490.10:FF:000001">
    <property type="entry name" value="30S ribosomal protein S8"/>
    <property type="match status" value="1"/>
</dbReference>
<dbReference type="Gene3D" id="3.30.1370.30">
    <property type="match status" value="1"/>
</dbReference>
<dbReference type="Gene3D" id="3.30.1490.10">
    <property type="match status" value="1"/>
</dbReference>
<dbReference type="HAMAP" id="MF_01302_B">
    <property type="entry name" value="Ribosomal_uS8_B"/>
    <property type="match status" value="1"/>
</dbReference>
<dbReference type="InterPro" id="IPR000630">
    <property type="entry name" value="Ribosomal_uS8"/>
</dbReference>
<dbReference type="InterPro" id="IPR047863">
    <property type="entry name" value="Ribosomal_uS8_CS"/>
</dbReference>
<dbReference type="InterPro" id="IPR035987">
    <property type="entry name" value="Ribosomal_uS8_sf"/>
</dbReference>
<dbReference type="NCBIfam" id="NF001109">
    <property type="entry name" value="PRK00136.1"/>
    <property type="match status" value="1"/>
</dbReference>
<dbReference type="PANTHER" id="PTHR11758">
    <property type="entry name" value="40S RIBOSOMAL PROTEIN S15A"/>
    <property type="match status" value="1"/>
</dbReference>
<dbReference type="Pfam" id="PF00410">
    <property type="entry name" value="Ribosomal_S8"/>
    <property type="match status" value="1"/>
</dbReference>
<dbReference type="SUPFAM" id="SSF56047">
    <property type="entry name" value="Ribosomal protein S8"/>
    <property type="match status" value="1"/>
</dbReference>
<dbReference type="PROSITE" id="PS00053">
    <property type="entry name" value="RIBOSOMAL_S8"/>
    <property type="match status" value="1"/>
</dbReference>
<organism>
    <name type="scientific">Bacillus licheniformis (strain ATCC 14580 / DSM 13 / JCM 2505 / CCUG 7422 / NBRC 12200 / NCIMB 9375 / NCTC 10341 / NRRL NRS-1264 / Gibson 46)</name>
    <dbReference type="NCBI Taxonomy" id="279010"/>
    <lineage>
        <taxon>Bacteria</taxon>
        <taxon>Bacillati</taxon>
        <taxon>Bacillota</taxon>
        <taxon>Bacilli</taxon>
        <taxon>Bacillales</taxon>
        <taxon>Bacillaceae</taxon>
        <taxon>Bacillus</taxon>
    </lineage>
</organism>
<name>RS8_BACLD</name>
<accession>Q65P93</accession>
<accession>Q62ZN2</accession>